<name>PAGP_KLEP7</name>
<organism>
    <name type="scientific">Klebsiella pneumoniae subsp. pneumoniae (strain ATCC 700721 / MGH 78578)</name>
    <dbReference type="NCBI Taxonomy" id="272620"/>
    <lineage>
        <taxon>Bacteria</taxon>
        <taxon>Pseudomonadati</taxon>
        <taxon>Pseudomonadota</taxon>
        <taxon>Gammaproteobacteria</taxon>
        <taxon>Enterobacterales</taxon>
        <taxon>Enterobacteriaceae</taxon>
        <taxon>Klebsiella/Raoultella group</taxon>
        <taxon>Klebsiella</taxon>
        <taxon>Klebsiella pneumoniae complex</taxon>
    </lineage>
</organism>
<reference key="1">
    <citation type="submission" date="2006-09" db="EMBL/GenBank/DDBJ databases">
        <authorList>
            <consortium name="The Klebsiella pneumonia Genome Sequencing Project"/>
            <person name="McClelland M."/>
            <person name="Sanderson E.K."/>
            <person name="Spieth J."/>
            <person name="Clifton W.S."/>
            <person name="Latreille P."/>
            <person name="Sabo A."/>
            <person name="Pepin K."/>
            <person name="Bhonagiri V."/>
            <person name="Porwollik S."/>
            <person name="Ali J."/>
            <person name="Wilson R.K."/>
        </authorList>
    </citation>
    <scope>NUCLEOTIDE SEQUENCE [LARGE SCALE GENOMIC DNA]</scope>
    <source>
        <strain>ATCC 700721 / MGH 78578</strain>
    </source>
</reference>
<evidence type="ECO:0000255" key="1">
    <source>
        <dbReference type="HAMAP-Rule" id="MF_00837"/>
    </source>
</evidence>
<proteinExistence type="inferred from homology"/>
<feature type="signal peptide" evidence="1">
    <location>
        <begin position="1"/>
        <end position="24"/>
    </location>
</feature>
<feature type="chain" id="PRO_0000414455" description="Lipid A acyltransferase PagP">
    <location>
        <begin position="25"/>
        <end position="189"/>
    </location>
</feature>
<feature type="active site" evidence="1">
    <location>
        <position position="61"/>
    </location>
</feature>
<feature type="active site" evidence="1">
    <location>
        <position position="104"/>
    </location>
</feature>
<feature type="active site" evidence="1">
    <location>
        <position position="105"/>
    </location>
</feature>
<feature type="site" description="Role in lipopolysaccharide recognition" evidence="1">
    <location>
        <position position="70"/>
    </location>
</feature>
<feature type="site" description="Role in the phospholipid gating" evidence="1">
    <location>
        <position position="175"/>
    </location>
</feature>
<dbReference type="EC" id="2.3.1.251" evidence="1"/>
<dbReference type="EMBL" id="CP000647">
    <property type="protein sequence ID" value="ABR76105.1"/>
    <property type="molecule type" value="Genomic_DNA"/>
</dbReference>
<dbReference type="SMR" id="A6T684"/>
<dbReference type="STRING" id="272620.KPN_00655"/>
<dbReference type="PaxDb" id="272620-KPN_00655"/>
<dbReference type="EnsemblBacteria" id="ABR76105">
    <property type="protein sequence ID" value="ABR76105"/>
    <property type="gene ID" value="KPN_00655"/>
</dbReference>
<dbReference type="KEGG" id="kpn:KPN_00655"/>
<dbReference type="HOGENOM" id="CLU_104099_0_0_6"/>
<dbReference type="PHI-base" id="PHI:7956"/>
<dbReference type="Proteomes" id="UP000000265">
    <property type="component" value="Chromosome"/>
</dbReference>
<dbReference type="GO" id="GO:0009279">
    <property type="term" value="C:cell outer membrane"/>
    <property type="evidence" value="ECO:0007669"/>
    <property type="project" value="UniProtKB-SubCell"/>
</dbReference>
<dbReference type="GO" id="GO:0016746">
    <property type="term" value="F:acyltransferase activity"/>
    <property type="evidence" value="ECO:0007669"/>
    <property type="project" value="UniProtKB-UniRule"/>
</dbReference>
<dbReference type="GO" id="GO:0009245">
    <property type="term" value="P:lipid A biosynthetic process"/>
    <property type="evidence" value="ECO:0007669"/>
    <property type="project" value="UniProtKB-UniRule"/>
</dbReference>
<dbReference type="FunFam" id="2.40.160.20:FF:000002">
    <property type="entry name" value="Lipid A palmitoyltransferase PagP"/>
    <property type="match status" value="1"/>
</dbReference>
<dbReference type="Gene3D" id="2.40.160.20">
    <property type="match status" value="1"/>
</dbReference>
<dbReference type="HAMAP" id="MF_00837">
    <property type="entry name" value="PagP_transferase"/>
    <property type="match status" value="1"/>
</dbReference>
<dbReference type="InterPro" id="IPR009746">
    <property type="entry name" value="LipidA_acyl_PagP"/>
</dbReference>
<dbReference type="InterPro" id="IPR011250">
    <property type="entry name" value="OMP/PagP_b-brl"/>
</dbReference>
<dbReference type="NCBIfam" id="NF008271">
    <property type="entry name" value="PRK11045.1"/>
    <property type="match status" value="1"/>
</dbReference>
<dbReference type="Pfam" id="PF07017">
    <property type="entry name" value="PagP"/>
    <property type="match status" value="1"/>
</dbReference>
<dbReference type="SUPFAM" id="SSF56925">
    <property type="entry name" value="OMPA-like"/>
    <property type="match status" value="1"/>
</dbReference>
<accession>A6T684</accession>
<gene>
    <name evidence="1" type="primary">pagP</name>
    <name type="synonym">crcA</name>
    <name type="ordered locus">KPN78578_06440</name>
    <name type="ORF">KPN_00655</name>
</gene>
<comment type="function">
    <text evidence="1">Transfers a fatty acid residue from the sn-1 position of a phospholipid to the N-linked hydroxyfatty acid chain on the proximal unit of lipid A or its precursors.</text>
</comment>
<comment type="catalytic activity">
    <reaction evidence="1">
        <text>a lipid A + a 1,2-diacyl-sn-glycero-3-phosphocholine = a hepta-acyl lipid A + a 2-acyl-sn-glycero-3-phosphocholine</text>
        <dbReference type="Rhea" id="RHEA:74275"/>
        <dbReference type="ChEBI" id="CHEBI:57643"/>
        <dbReference type="ChEBI" id="CHEBI:57875"/>
        <dbReference type="ChEBI" id="CHEBI:193141"/>
        <dbReference type="ChEBI" id="CHEBI:193142"/>
        <dbReference type="EC" id="2.3.1.251"/>
    </reaction>
</comment>
<comment type="catalytic activity">
    <reaction evidence="1">
        <text>a lipid IVA + a 1,2-diacyl-sn-glycero-3-phosphocholine = a lipid IVB + a 2-acyl-sn-glycero-3-phosphocholine</text>
        <dbReference type="Rhea" id="RHEA:74279"/>
        <dbReference type="ChEBI" id="CHEBI:57643"/>
        <dbReference type="ChEBI" id="CHEBI:57875"/>
        <dbReference type="ChEBI" id="CHEBI:176425"/>
        <dbReference type="ChEBI" id="CHEBI:193143"/>
        <dbReference type="EC" id="2.3.1.251"/>
    </reaction>
</comment>
<comment type="catalytic activity">
    <reaction evidence="1">
        <text>a lipid IIA + a 1,2-diacyl-sn-glycero-3-phosphocholine = a lipid IIB + a 2-acyl-sn-glycero-3-phosphocholine</text>
        <dbReference type="Rhea" id="RHEA:74283"/>
        <dbReference type="ChEBI" id="CHEBI:57643"/>
        <dbReference type="ChEBI" id="CHEBI:57875"/>
        <dbReference type="ChEBI" id="CHEBI:193144"/>
        <dbReference type="ChEBI" id="CHEBI:193145"/>
        <dbReference type="EC" id="2.3.1.251"/>
    </reaction>
</comment>
<comment type="subunit">
    <text evidence="1">Homodimer.</text>
</comment>
<comment type="subcellular location">
    <subcellularLocation>
        <location evidence="1">Cell outer membrane</location>
    </subcellularLocation>
</comment>
<comment type="similarity">
    <text evidence="1">Belongs to the lipid A palmitoyltransferase family.</text>
</comment>
<protein>
    <recommendedName>
        <fullName evidence="1">Lipid A acyltransferase PagP</fullName>
        <ecNumber evidence="1">2.3.1.251</ecNumber>
    </recommendedName>
    <alternativeName>
        <fullName evidence="1">Lipid A acylation protein</fullName>
    </alternativeName>
</protein>
<keyword id="KW-0012">Acyltransferase</keyword>
<keyword id="KW-0998">Cell outer membrane</keyword>
<keyword id="KW-0472">Membrane</keyword>
<keyword id="KW-0732">Signal</keyword>
<keyword id="KW-0808">Transferase</keyword>
<sequence>MLRRFSLFSLGFLGWLLVSGNASASFSSTLSEGYHTLSNNVAQTWNEPEHYDLYVPAITWHARFAYDKEKTDKYNERPWGAGFGVSRWDEKGNWHGLYLMAFKDSFNKWEPIGGYGWEKTWRPLTDQNFHLGLGYTLGVTARDNWNYIPIPVILPLASIGYGPATFQMTYIPGTYNNGNVYFAWARFQF</sequence>